<reference key="1">
    <citation type="submission" date="2005-09" db="EMBL/GenBank/DDBJ databases">
        <authorList>
            <consortium name="NIH - Mammalian Gene Collection (MGC) project"/>
        </authorList>
    </citation>
    <scope>NUCLEOTIDE SEQUENCE [LARGE SCALE MRNA]</scope>
    <source>
        <strain>Hereford</strain>
        <tissue>Hypothalamus</tissue>
    </source>
</reference>
<dbReference type="EMBL" id="BC105451">
    <property type="protein sequence ID" value="AAI05452.1"/>
    <property type="molecule type" value="mRNA"/>
</dbReference>
<dbReference type="RefSeq" id="NP_001039710.1">
    <property type="nucleotide sequence ID" value="NM_001046245.2"/>
</dbReference>
<dbReference type="SMR" id="Q2KJ96"/>
<dbReference type="FunCoup" id="Q2KJ96">
    <property type="interactions" value="3728"/>
</dbReference>
<dbReference type="STRING" id="9913.ENSBTAP00000002959"/>
<dbReference type="PaxDb" id="9913-ENSBTAP00000002959"/>
<dbReference type="GeneID" id="519694"/>
<dbReference type="KEGG" id="bta:519694"/>
<dbReference type="CTD" id="26225"/>
<dbReference type="VEuPathDB" id="HostDB:ENSBTAG00000002293"/>
<dbReference type="eggNOG" id="KOG0070">
    <property type="taxonomic scope" value="Eukaryota"/>
</dbReference>
<dbReference type="HOGENOM" id="CLU_040729_9_1_1"/>
<dbReference type="InParanoid" id="Q2KJ96"/>
<dbReference type="OMA" id="ILFARIW"/>
<dbReference type="OrthoDB" id="2011769at2759"/>
<dbReference type="TreeFam" id="TF105465"/>
<dbReference type="Proteomes" id="UP000009136">
    <property type="component" value="Chromosome 2"/>
</dbReference>
<dbReference type="Bgee" id="ENSBTAG00000002293">
    <property type="expression patterns" value="Expressed in thymus and 108 other cell types or tissues"/>
</dbReference>
<dbReference type="GO" id="GO:0005737">
    <property type="term" value="C:cytoplasm"/>
    <property type="evidence" value="ECO:0000318"/>
    <property type="project" value="GO_Central"/>
</dbReference>
<dbReference type="GO" id="GO:0005802">
    <property type="term" value="C:trans-Golgi network"/>
    <property type="evidence" value="ECO:0000318"/>
    <property type="project" value="GO_Central"/>
</dbReference>
<dbReference type="GO" id="GO:0005525">
    <property type="term" value="F:GTP binding"/>
    <property type="evidence" value="ECO:0000318"/>
    <property type="project" value="GO_Central"/>
</dbReference>
<dbReference type="GO" id="GO:0003924">
    <property type="term" value="F:GTPase activity"/>
    <property type="evidence" value="ECO:0007669"/>
    <property type="project" value="InterPro"/>
</dbReference>
<dbReference type="GO" id="GO:0006886">
    <property type="term" value="P:intracellular protein transport"/>
    <property type="evidence" value="ECO:0000318"/>
    <property type="project" value="GO_Central"/>
</dbReference>
<dbReference type="GO" id="GO:1903292">
    <property type="term" value="P:protein localization to Golgi membrane"/>
    <property type="evidence" value="ECO:0000318"/>
    <property type="project" value="GO_Central"/>
</dbReference>
<dbReference type="GO" id="GO:0016192">
    <property type="term" value="P:vesicle-mediated transport"/>
    <property type="evidence" value="ECO:0000318"/>
    <property type="project" value="GO_Central"/>
</dbReference>
<dbReference type="CDD" id="cd04153">
    <property type="entry name" value="Arl5_Arl8"/>
    <property type="match status" value="1"/>
</dbReference>
<dbReference type="FunFam" id="3.40.50.300:FF:000294">
    <property type="entry name" value="ADP-ribosylation factor-like protein 5A"/>
    <property type="match status" value="1"/>
</dbReference>
<dbReference type="Gene3D" id="3.40.50.300">
    <property type="entry name" value="P-loop containing nucleotide triphosphate hydrolases"/>
    <property type="match status" value="1"/>
</dbReference>
<dbReference type="InterPro" id="IPR027417">
    <property type="entry name" value="P-loop_NTPase"/>
</dbReference>
<dbReference type="InterPro" id="IPR005225">
    <property type="entry name" value="Small_GTP-bd"/>
</dbReference>
<dbReference type="InterPro" id="IPR024156">
    <property type="entry name" value="Small_GTPase_ARF"/>
</dbReference>
<dbReference type="InterPro" id="IPR006689">
    <property type="entry name" value="Small_GTPase_ARF/SAR"/>
</dbReference>
<dbReference type="NCBIfam" id="TIGR00231">
    <property type="entry name" value="small_GTP"/>
    <property type="match status" value="1"/>
</dbReference>
<dbReference type="PANTHER" id="PTHR11711">
    <property type="entry name" value="ADP RIBOSYLATION FACTOR-RELATED"/>
    <property type="match status" value="1"/>
</dbReference>
<dbReference type="Pfam" id="PF00025">
    <property type="entry name" value="Arf"/>
    <property type="match status" value="1"/>
</dbReference>
<dbReference type="PRINTS" id="PR00328">
    <property type="entry name" value="SAR1GTPBP"/>
</dbReference>
<dbReference type="SMART" id="SM00177">
    <property type="entry name" value="ARF"/>
    <property type="match status" value="1"/>
</dbReference>
<dbReference type="SMART" id="SM00178">
    <property type="entry name" value="SAR"/>
    <property type="match status" value="1"/>
</dbReference>
<dbReference type="SUPFAM" id="SSF52540">
    <property type="entry name" value="P-loop containing nucleoside triphosphate hydrolases"/>
    <property type="match status" value="1"/>
</dbReference>
<dbReference type="PROSITE" id="PS51417">
    <property type="entry name" value="ARF"/>
    <property type="match status" value="1"/>
</dbReference>
<comment type="function">
    <text evidence="1">Lacks ADP-ribosylation enhancing activity.</text>
</comment>
<comment type="similarity">
    <text evidence="3">Belongs to the small GTPase superfamily. Arf family.</text>
</comment>
<accession>Q2KJ96</accession>
<protein>
    <recommendedName>
        <fullName>ADP-ribosylation factor-like protein 5A</fullName>
    </recommendedName>
</protein>
<organism>
    <name type="scientific">Bos taurus</name>
    <name type="common">Bovine</name>
    <dbReference type="NCBI Taxonomy" id="9913"/>
    <lineage>
        <taxon>Eukaryota</taxon>
        <taxon>Metazoa</taxon>
        <taxon>Chordata</taxon>
        <taxon>Craniata</taxon>
        <taxon>Vertebrata</taxon>
        <taxon>Euteleostomi</taxon>
        <taxon>Mammalia</taxon>
        <taxon>Eutheria</taxon>
        <taxon>Laurasiatheria</taxon>
        <taxon>Artiodactyla</taxon>
        <taxon>Ruminantia</taxon>
        <taxon>Pecora</taxon>
        <taxon>Bovidae</taxon>
        <taxon>Bovinae</taxon>
        <taxon>Bos</taxon>
    </lineage>
</organism>
<keyword id="KW-0342">GTP-binding</keyword>
<keyword id="KW-0449">Lipoprotein</keyword>
<keyword id="KW-0519">Myristate</keyword>
<keyword id="KW-0547">Nucleotide-binding</keyword>
<keyword id="KW-1185">Reference proteome</keyword>
<name>ARL5A_BOVIN</name>
<feature type="initiator methionine" description="Removed" evidence="2">
    <location>
        <position position="1"/>
    </location>
</feature>
<feature type="chain" id="PRO_0000239732" description="ADP-ribosylation factor-like protein 5A">
    <location>
        <begin position="2"/>
        <end position="179"/>
    </location>
</feature>
<feature type="binding site" evidence="1">
    <location>
        <begin position="23"/>
        <end position="30"/>
    </location>
    <ligand>
        <name>GTP</name>
        <dbReference type="ChEBI" id="CHEBI:37565"/>
    </ligand>
</feature>
<feature type="binding site" evidence="1">
    <location>
        <begin position="66"/>
        <end position="70"/>
    </location>
    <ligand>
        <name>GTP</name>
        <dbReference type="ChEBI" id="CHEBI:37565"/>
    </ligand>
</feature>
<feature type="binding site" evidence="1">
    <location>
        <begin position="125"/>
        <end position="128"/>
    </location>
    <ligand>
        <name>GTP</name>
        <dbReference type="ChEBI" id="CHEBI:37565"/>
    </ligand>
</feature>
<feature type="binding site" evidence="1">
    <location>
        <position position="159"/>
    </location>
    <ligand>
        <name>GTP</name>
        <dbReference type="ChEBI" id="CHEBI:37565"/>
    </ligand>
</feature>
<feature type="lipid moiety-binding region" description="N-myristoyl glycine" evidence="2">
    <location>
        <position position="2"/>
    </location>
</feature>
<gene>
    <name type="primary">ARL5A</name>
</gene>
<proteinExistence type="evidence at transcript level"/>
<evidence type="ECO:0000250" key="1"/>
<evidence type="ECO:0000255" key="2"/>
<evidence type="ECO:0000305" key="3"/>
<sequence length="179" mass="20656">MGILFTRIWRLFNHQEHKVIIVGLDNAGKTTILYQFSMNEVVHTSPTIGSNVEEIVINNTRFLMWDIGGQESLRSSWNTYYTNTEFVIVVVDSTDRERISVTREELYKMLAHEDLRKAGLLIFANKQDVKGCMTVAEISQFLKLTSIKDHQWHIQACCALTGEGLCQGLEWMMSRLKIR</sequence>